<organism>
    <name type="scientific">Brucella suis (strain ATCC 23445 / NCTC 10510)</name>
    <dbReference type="NCBI Taxonomy" id="470137"/>
    <lineage>
        <taxon>Bacteria</taxon>
        <taxon>Pseudomonadati</taxon>
        <taxon>Pseudomonadota</taxon>
        <taxon>Alphaproteobacteria</taxon>
        <taxon>Hyphomicrobiales</taxon>
        <taxon>Brucellaceae</taxon>
        <taxon>Brucella/Ochrobactrum group</taxon>
        <taxon>Brucella</taxon>
    </lineage>
</organism>
<proteinExistence type="inferred from homology"/>
<protein>
    <recommendedName>
        <fullName evidence="1">Polyribonucleotide nucleotidyltransferase</fullName>
        <ecNumber evidence="1">2.7.7.8</ecNumber>
    </recommendedName>
    <alternativeName>
        <fullName evidence="1">Polynucleotide phosphorylase</fullName>
        <shortName evidence="1">PNPase</shortName>
    </alternativeName>
</protein>
<reference key="1">
    <citation type="submission" date="2007-12" db="EMBL/GenBank/DDBJ databases">
        <title>Brucella suis ATCC 23445 whole genome shotgun sequencing project.</title>
        <authorList>
            <person name="Setubal J.C."/>
            <person name="Bowns C."/>
            <person name="Boyle S."/>
            <person name="Crasta O.R."/>
            <person name="Czar M.J."/>
            <person name="Dharmanolla C."/>
            <person name="Gillespie J.J."/>
            <person name="Kenyon R.W."/>
            <person name="Lu J."/>
            <person name="Mane S."/>
            <person name="Mohapatra S."/>
            <person name="Nagrani S."/>
            <person name="Purkayastha A."/>
            <person name="Rajasimha H.K."/>
            <person name="Shallom J.M."/>
            <person name="Shallom S."/>
            <person name="Shukla M."/>
            <person name="Snyder E.E."/>
            <person name="Sobral B.W."/>
            <person name="Wattam A.R."/>
            <person name="Will R."/>
            <person name="Williams K."/>
            <person name="Yoo H."/>
            <person name="Bruce D."/>
            <person name="Detter C."/>
            <person name="Munk C."/>
            <person name="Brettin T.S."/>
        </authorList>
    </citation>
    <scope>NUCLEOTIDE SEQUENCE [LARGE SCALE GENOMIC DNA]</scope>
    <source>
        <strain>ATCC 23445 / NCTC 10510</strain>
    </source>
</reference>
<name>PNP_BRUSI</name>
<evidence type="ECO:0000255" key="1">
    <source>
        <dbReference type="HAMAP-Rule" id="MF_01595"/>
    </source>
</evidence>
<accession>B0CK15</accession>
<sequence>MFNTHKVEIEWGGRPLTLETGKIARQADGAVLATYGETAVLATVVSAKEPKPGQDFFPLTVNYQEKTYAAGKIPGGYFKREGRPSENETLVSRLIDRPIRPLFVDGYKNDTQVVITVLQHDLENNPDILSMVAASAALTISGVPFMGPISGARVGYIDGEYVLNPNIDEMPESKLDLVVAGTSEAVLMVESEAQELPEDVMLGAVMFGHKSFQPVIDAIIKLAEVAAKEPRDFQPEDLSELEAKVLAVVENDLREAYKITEKQARYAAVDAAKAKAKEHFFPEGVEETEMSAEQFATIFKHLQAKIVRWNILDTGNRIDGRDLSTVRPIVSEVGILPRTHGSALFTRGETQAIVVATLGTGEDEQMIDALTGTYKESFMLHYNFPPYSVGETGRMGSPGRREIGHGKLAWRAIHPMLPAAEQFPYTIRAVSEITESNGSSSMATVCGTSLALMDAGVPIVRPVAGIAMGLIKEGERFAVLSDILGDEDHLGDMDFKVAGTEFGITSLQMDIKIDGITEEIMKVALEQAKGGRVHILGEMAKAISSSRAELGEFAPRIEVMNIPTDKIRDVIGSGGKVIREIVEKTGAKINIEDDGTVKIASSNGKEIEAAKKWIHSIVAEPEVGEIYEGTVVKTADFGAFVNFFGPRDGLVHISQLAADRVAKTTDVVKEGQKVWVKLMGFDERGKVRLSMKVVDQETGKEIVAEKKKEEVDAE</sequence>
<comment type="function">
    <text evidence="1">Involved in mRNA degradation. Catalyzes the phosphorolysis of single-stranded polyribonucleotides processively in the 3'- to 5'-direction.</text>
</comment>
<comment type="catalytic activity">
    <reaction evidence="1">
        <text>RNA(n+1) + phosphate = RNA(n) + a ribonucleoside 5'-diphosphate</text>
        <dbReference type="Rhea" id="RHEA:22096"/>
        <dbReference type="Rhea" id="RHEA-COMP:14527"/>
        <dbReference type="Rhea" id="RHEA-COMP:17342"/>
        <dbReference type="ChEBI" id="CHEBI:43474"/>
        <dbReference type="ChEBI" id="CHEBI:57930"/>
        <dbReference type="ChEBI" id="CHEBI:140395"/>
        <dbReference type="EC" id="2.7.7.8"/>
    </reaction>
</comment>
<comment type="cofactor">
    <cofactor evidence="1">
        <name>Mg(2+)</name>
        <dbReference type="ChEBI" id="CHEBI:18420"/>
    </cofactor>
</comment>
<comment type="subcellular location">
    <subcellularLocation>
        <location evidence="1">Cytoplasm</location>
    </subcellularLocation>
</comment>
<comment type="similarity">
    <text evidence="1">Belongs to the polyribonucleotide nucleotidyltransferase family.</text>
</comment>
<feature type="chain" id="PRO_1000087985" description="Polyribonucleotide nucleotidyltransferase">
    <location>
        <begin position="1"/>
        <end position="714"/>
    </location>
</feature>
<feature type="domain" description="KH" evidence="1">
    <location>
        <begin position="555"/>
        <end position="614"/>
    </location>
</feature>
<feature type="domain" description="S1 motif" evidence="1">
    <location>
        <begin position="624"/>
        <end position="692"/>
    </location>
</feature>
<feature type="binding site" evidence="1">
    <location>
        <position position="488"/>
    </location>
    <ligand>
        <name>Mg(2+)</name>
        <dbReference type="ChEBI" id="CHEBI:18420"/>
    </ligand>
</feature>
<feature type="binding site" evidence="1">
    <location>
        <position position="494"/>
    </location>
    <ligand>
        <name>Mg(2+)</name>
        <dbReference type="ChEBI" id="CHEBI:18420"/>
    </ligand>
</feature>
<keyword id="KW-0963">Cytoplasm</keyword>
<keyword id="KW-0460">Magnesium</keyword>
<keyword id="KW-0479">Metal-binding</keyword>
<keyword id="KW-0548">Nucleotidyltransferase</keyword>
<keyword id="KW-0694">RNA-binding</keyword>
<keyword id="KW-0808">Transferase</keyword>
<dbReference type="EC" id="2.7.7.8" evidence="1"/>
<dbReference type="EMBL" id="CP000911">
    <property type="protein sequence ID" value="ABY39016.1"/>
    <property type="molecule type" value="Genomic_DNA"/>
</dbReference>
<dbReference type="RefSeq" id="WP_002965231.1">
    <property type="nucleotide sequence ID" value="NC_010169.1"/>
</dbReference>
<dbReference type="SMR" id="B0CK15"/>
<dbReference type="GeneID" id="97534578"/>
<dbReference type="KEGG" id="bmt:BSUIS_A2006"/>
<dbReference type="HOGENOM" id="CLU_004217_2_2_5"/>
<dbReference type="Proteomes" id="UP000008545">
    <property type="component" value="Chromosome I"/>
</dbReference>
<dbReference type="GO" id="GO:0005829">
    <property type="term" value="C:cytosol"/>
    <property type="evidence" value="ECO:0007669"/>
    <property type="project" value="TreeGrafter"/>
</dbReference>
<dbReference type="GO" id="GO:0000175">
    <property type="term" value="F:3'-5'-RNA exonuclease activity"/>
    <property type="evidence" value="ECO:0007669"/>
    <property type="project" value="TreeGrafter"/>
</dbReference>
<dbReference type="GO" id="GO:0000287">
    <property type="term" value="F:magnesium ion binding"/>
    <property type="evidence" value="ECO:0007669"/>
    <property type="project" value="UniProtKB-UniRule"/>
</dbReference>
<dbReference type="GO" id="GO:0004654">
    <property type="term" value="F:polyribonucleotide nucleotidyltransferase activity"/>
    <property type="evidence" value="ECO:0007669"/>
    <property type="project" value="UniProtKB-UniRule"/>
</dbReference>
<dbReference type="GO" id="GO:0003723">
    <property type="term" value="F:RNA binding"/>
    <property type="evidence" value="ECO:0007669"/>
    <property type="project" value="UniProtKB-UniRule"/>
</dbReference>
<dbReference type="GO" id="GO:0006402">
    <property type="term" value="P:mRNA catabolic process"/>
    <property type="evidence" value="ECO:0007669"/>
    <property type="project" value="UniProtKB-UniRule"/>
</dbReference>
<dbReference type="GO" id="GO:0006396">
    <property type="term" value="P:RNA processing"/>
    <property type="evidence" value="ECO:0007669"/>
    <property type="project" value="InterPro"/>
</dbReference>
<dbReference type="CDD" id="cd02393">
    <property type="entry name" value="KH-I_PNPase"/>
    <property type="match status" value="1"/>
</dbReference>
<dbReference type="CDD" id="cd11363">
    <property type="entry name" value="RNase_PH_PNPase_1"/>
    <property type="match status" value="1"/>
</dbReference>
<dbReference type="CDD" id="cd11364">
    <property type="entry name" value="RNase_PH_PNPase_2"/>
    <property type="match status" value="1"/>
</dbReference>
<dbReference type="CDD" id="cd04472">
    <property type="entry name" value="S1_PNPase"/>
    <property type="match status" value="1"/>
</dbReference>
<dbReference type="FunFam" id="2.40.50.140:FF:000107">
    <property type="entry name" value="Polyribonucleotide nucleotidyltransferase"/>
    <property type="match status" value="1"/>
</dbReference>
<dbReference type="FunFam" id="3.30.1370.10:FF:000001">
    <property type="entry name" value="Polyribonucleotide nucleotidyltransferase"/>
    <property type="match status" value="1"/>
</dbReference>
<dbReference type="FunFam" id="3.30.230.70:FF:000001">
    <property type="entry name" value="Polyribonucleotide nucleotidyltransferase"/>
    <property type="match status" value="1"/>
</dbReference>
<dbReference type="FunFam" id="3.30.230.70:FF:000002">
    <property type="entry name" value="Polyribonucleotide nucleotidyltransferase"/>
    <property type="match status" value="1"/>
</dbReference>
<dbReference type="Gene3D" id="3.30.230.70">
    <property type="entry name" value="GHMP Kinase, N-terminal domain"/>
    <property type="match status" value="2"/>
</dbReference>
<dbReference type="Gene3D" id="3.30.1370.10">
    <property type="entry name" value="K Homology domain, type 1"/>
    <property type="match status" value="1"/>
</dbReference>
<dbReference type="Gene3D" id="2.40.50.140">
    <property type="entry name" value="Nucleic acid-binding proteins"/>
    <property type="match status" value="1"/>
</dbReference>
<dbReference type="HAMAP" id="MF_01595">
    <property type="entry name" value="PNPase"/>
    <property type="match status" value="1"/>
</dbReference>
<dbReference type="InterPro" id="IPR001247">
    <property type="entry name" value="ExoRNase_PH_dom1"/>
</dbReference>
<dbReference type="InterPro" id="IPR015847">
    <property type="entry name" value="ExoRNase_PH_dom2"/>
</dbReference>
<dbReference type="InterPro" id="IPR036345">
    <property type="entry name" value="ExoRNase_PH_dom2_sf"/>
</dbReference>
<dbReference type="InterPro" id="IPR004087">
    <property type="entry name" value="KH_dom"/>
</dbReference>
<dbReference type="InterPro" id="IPR004088">
    <property type="entry name" value="KH_dom_type_1"/>
</dbReference>
<dbReference type="InterPro" id="IPR036612">
    <property type="entry name" value="KH_dom_type_1_sf"/>
</dbReference>
<dbReference type="InterPro" id="IPR012340">
    <property type="entry name" value="NA-bd_OB-fold"/>
</dbReference>
<dbReference type="InterPro" id="IPR012162">
    <property type="entry name" value="PNPase"/>
</dbReference>
<dbReference type="InterPro" id="IPR027408">
    <property type="entry name" value="PNPase/RNase_PH_dom_sf"/>
</dbReference>
<dbReference type="InterPro" id="IPR015848">
    <property type="entry name" value="PNPase_PH_RNA-bd_bac/org-type"/>
</dbReference>
<dbReference type="InterPro" id="IPR020568">
    <property type="entry name" value="Ribosomal_Su5_D2-typ_SF"/>
</dbReference>
<dbReference type="InterPro" id="IPR003029">
    <property type="entry name" value="S1_domain"/>
</dbReference>
<dbReference type="NCBIfam" id="TIGR03591">
    <property type="entry name" value="polynuc_phos"/>
    <property type="match status" value="1"/>
</dbReference>
<dbReference type="NCBIfam" id="NF008805">
    <property type="entry name" value="PRK11824.1"/>
    <property type="match status" value="1"/>
</dbReference>
<dbReference type="PANTHER" id="PTHR11252">
    <property type="entry name" value="POLYRIBONUCLEOTIDE NUCLEOTIDYLTRANSFERASE"/>
    <property type="match status" value="1"/>
</dbReference>
<dbReference type="PANTHER" id="PTHR11252:SF0">
    <property type="entry name" value="POLYRIBONUCLEOTIDE NUCLEOTIDYLTRANSFERASE 1, MITOCHONDRIAL"/>
    <property type="match status" value="1"/>
</dbReference>
<dbReference type="Pfam" id="PF00013">
    <property type="entry name" value="KH_1"/>
    <property type="match status" value="1"/>
</dbReference>
<dbReference type="Pfam" id="PF03726">
    <property type="entry name" value="PNPase"/>
    <property type="match status" value="1"/>
</dbReference>
<dbReference type="Pfam" id="PF01138">
    <property type="entry name" value="RNase_PH"/>
    <property type="match status" value="2"/>
</dbReference>
<dbReference type="Pfam" id="PF03725">
    <property type="entry name" value="RNase_PH_C"/>
    <property type="match status" value="2"/>
</dbReference>
<dbReference type="Pfam" id="PF00575">
    <property type="entry name" value="S1"/>
    <property type="match status" value="1"/>
</dbReference>
<dbReference type="PIRSF" id="PIRSF005499">
    <property type="entry name" value="PNPase"/>
    <property type="match status" value="1"/>
</dbReference>
<dbReference type="SMART" id="SM00322">
    <property type="entry name" value="KH"/>
    <property type="match status" value="1"/>
</dbReference>
<dbReference type="SMART" id="SM00316">
    <property type="entry name" value="S1"/>
    <property type="match status" value="1"/>
</dbReference>
<dbReference type="SUPFAM" id="SSF54791">
    <property type="entry name" value="Eukaryotic type KH-domain (KH-domain type I)"/>
    <property type="match status" value="1"/>
</dbReference>
<dbReference type="SUPFAM" id="SSF50249">
    <property type="entry name" value="Nucleic acid-binding proteins"/>
    <property type="match status" value="1"/>
</dbReference>
<dbReference type="SUPFAM" id="SSF55666">
    <property type="entry name" value="Ribonuclease PH domain 2-like"/>
    <property type="match status" value="2"/>
</dbReference>
<dbReference type="SUPFAM" id="SSF54211">
    <property type="entry name" value="Ribosomal protein S5 domain 2-like"/>
    <property type="match status" value="2"/>
</dbReference>
<dbReference type="PROSITE" id="PS50084">
    <property type="entry name" value="KH_TYPE_1"/>
    <property type="match status" value="1"/>
</dbReference>
<dbReference type="PROSITE" id="PS50126">
    <property type="entry name" value="S1"/>
    <property type="match status" value="1"/>
</dbReference>
<gene>
    <name evidence="1" type="primary">pnp</name>
    <name type="ordered locus">BSUIS_A2006</name>
</gene>